<gene>
    <name type="primary">ZNF175</name>
</gene>
<dbReference type="EMBL" id="D50419">
    <property type="protein sequence ID" value="BAA23362.1"/>
    <property type="molecule type" value="mRNA"/>
</dbReference>
<dbReference type="EMBL" id="AK292687">
    <property type="protein sequence ID" value="BAF85376.1"/>
    <property type="molecule type" value="mRNA"/>
</dbReference>
<dbReference type="EMBL" id="AC018755">
    <property type="protein sequence ID" value="AAF87843.1"/>
    <property type="molecule type" value="Genomic_DNA"/>
</dbReference>
<dbReference type="EMBL" id="CH471135">
    <property type="protein sequence ID" value="EAW72030.1"/>
    <property type="molecule type" value="Genomic_DNA"/>
</dbReference>
<dbReference type="EMBL" id="BC052997">
    <property type="protein sequence ID" value="AAH52997.1"/>
    <property type="molecule type" value="mRNA"/>
</dbReference>
<dbReference type="CCDS" id="CCDS12837.1"/>
<dbReference type="RefSeq" id="NP_009078.1">
    <property type="nucleotide sequence ID" value="NM_007147.4"/>
</dbReference>
<dbReference type="SMR" id="Q9Y473"/>
<dbReference type="BioGRID" id="113517">
    <property type="interactions" value="17"/>
</dbReference>
<dbReference type="FunCoup" id="Q9Y473">
    <property type="interactions" value="495"/>
</dbReference>
<dbReference type="IntAct" id="Q9Y473">
    <property type="interactions" value="11"/>
</dbReference>
<dbReference type="STRING" id="9606.ENSP00000262259"/>
<dbReference type="GlyGen" id="Q9Y473">
    <property type="glycosylation" value="1 site, 1 O-linked glycan (1 site)"/>
</dbReference>
<dbReference type="iPTMnet" id="Q9Y473"/>
<dbReference type="PhosphoSitePlus" id="Q9Y473"/>
<dbReference type="BioMuta" id="ZNF175"/>
<dbReference type="REPRODUCTION-2DPAGE" id="Q9Y473"/>
<dbReference type="jPOST" id="Q9Y473"/>
<dbReference type="MassIVE" id="Q9Y473"/>
<dbReference type="PaxDb" id="9606-ENSP00000262259"/>
<dbReference type="PeptideAtlas" id="Q9Y473"/>
<dbReference type="ProteomicsDB" id="86121"/>
<dbReference type="Antibodypedia" id="813">
    <property type="antibodies" value="123 antibodies from 21 providers"/>
</dbReference>
<dbReference type="DNASU" id="7728"/>
<dbReference type="Ensembl" id="ENST00000262259.7">
    <property type="protein sequence ID" value="ENSP00000262259.2"/>
    <property type="gene ID" value="ENSG00000105497.8"/>
</dbReference>
<dbReference type="GeneID" id="7728"/>
<dbReference type="KEGG" id="hsa:7728"/>
<dbReference type="MANE-Select" id="ENST00000262259.7">
    <property type="protein sequence ID" value="ENSP00000262259.2"/>
    <property type="RefSeq nucleotide sequence ID" value="NM_007147.4"/>
    <property type="RefSeq protein sequence ID" value="NP_009078.1"/>
</dbReference>
<dbReference type="UCSC" id="uc002pxb.4">
    <property type="organism name" value="human"/>
</dbReference>
<dbReference type="AGR" id="HGNC:12964"/>
<dbReference type="CTD" id="7728"/>
<dbReference type="DisGeNET" id="7728"/>
<dbReference type="GeneCards" id="ZNF175"/>
<dbReference type="HGNC" id="HGNC:12964">
    <property type="gene designation" value="ZNF175"/>
</dbReference>
<dbReference type="HPA" id="ENSG00000105497">
    <property type="expression patterns" value="Low tissue specificity"/>
</dbReference>
<dbReference type="MIM" id="601139">
    <property type="type" value="gene"/>
</dbReference>
<dbReference type="neXtProt" id="NX_Q9Y473"/>
<dbReference type="OpenTargets" id="ENSG00000105497"/>
<dbReference type="PharmGKB" id="PA37546"/>
<dbReference type="VEuPathDB" id="HostDB:ENSG00000105497"/>
<dbReference type="eggNOG" id="KOG1721">
    <property type="taxonomic scope" value="Eukaryota"/>
</dbReference>
<dbReference type="GeneTree" id="ENSGT00940000163075"/>
<dbReference type="HOGENOM" id="CLU_002678_44_5_1"/>
<dbReference type="InParanoid" id="Q9Y473"/>
<dbReference type="OMA" id="YQCHSCG"/>
<dbReference type="OrthoDB" id="427030at2759"/>
<dbReference type="PAN-GO" id="Q9Y473">
    <property type="GO annotations" value="4 GO annotations based on evolutionary models"/>
</dbReference>
<dbReference type="PhylomeDB" id="Q9Y473"/>
<dbReference type="TreeFam" id="TF350810"/>
<dbReference type="PathwayCommons" id="Q9Y473"/>
<dbReference type="Reactome" id="R-HSA-212436">
    <property type="pathway name" value="Generic Transcription Pathway"/>
</dbReference>
<dbReference type="SignaLink" id="Q9Y473"/>
<dbReference type="BioGRID-ORCS" id="7728">
    <property type="hits" value="12 hits in 1179 CRISPR screens"/>
</dbReference>
<dbReference type="ChiTaRS" id="ZNF175">
    <property type="organism name" value="human"/>
</dbReference>
<dbReference type="GenomeRNAi" id="7728"/>
<dbReference type="Pharos" id="Q9Y473">
    <property type="development level" value="Tbio"/>
</dbReference>
<dbReference type="PRO" id="PR:Q9Y473"/>
<dbReference type="Proteomes" id="UP000005640">
    <property type="component" value="Chromosome 19"/>
</dbReference>
<dbReference type="RNAct" id="Q9Y473">
    <property type="molecule type" value="protein"/>
</dbReference>
<dbReference type="Bgee" id="ENSG00000105497">
    <property type="expression patterns" value="Expressed in dorsal motor nucleus of vagus nerve and 180 other cell types or tissues"/>
</dbReference>
<dbReference type="ExpressionAtlas" id="Q9Y473">
    <property type="expression patterns" value="baseline and differential"/>
</dbReference>
<dbReference type="GO" id="GO:0005829">
    <property type="term" value="C:cytosol"/>
    <property type="evidence" value="ECO:0000314"/>
    <property type="project" value="HPA"/>
</dbReference>
<dbReference type="GO" id="GO:0005730">
    <property type="term" value="C:nucleolus"/>
    <property type="evidence" value="ECO:0000314"/>
    <property type="project" value="HPA"/>
</dbReference>
<dbReference type="GO" id="GO:0001228">
    <property type="term" value="F:DNA-binding transcription activator activity, RNA polymerase II-specific"/>
    <property type="evidence" value="ECO:0000314"/>
    <property type="project" value="NTNU_SB"/>
</dbReference>
<dbReference type="GO" id="GO:0003700">
    <property type="term" value="F:DNA-binding transcription factor activity"/>
    <property type="evidence" value="ECO:0000304"/>
    <property type="project" value="ProtInc"/>
</dbReference>
<dbReference type="GO" id="GO:0001227">
    <property type="term" value="F:DNA-binding transcription repressor activity, RNA polymerase II-specific"/>
    <property type="evidence" value="ECO:0000314"/>
    <property type="project" value="NTNU_SB"/>
</dbReference>
<dbReference type="GO" id="GO:0000977">
    <property type="term" value="F:RNA polymerase II transcription regulatory region sequence-specific DNA binding"/>
    <property type="evidence" value="ECO:0000314"/>
    <property type="project" value="NTNU_SB"/>
</dbReference>
<dbReference type="GO" id="GO:0008270">
    <property type="term" value="F:zinc ion binding"/>
    <property type="evidence" value="ECO:0007669"/>
    <property type="project" value="UniProtKB-KW"/>
</dbReference>
<dbReference type="GO" id="GO:0051607">
    <property type="term" value="P:defense response to virus"/>
    <property type="evidence" value="ECO:0007669"/>
    <property type="project" value="UniProtKB-KW"/>
</dbReference>
<dbReference type="GO" id="GO:0000122">
    <property type="term" value="P:negative regulation of transcription by RNA polymerase II"/>
    <property type="evidence" value="ECO:0000314"/>
    <property type="project" value="NTNU_SB"/>
</dbReference>
<dbReference type="GO" id="GO:0045944">
    <property type="term" value="P:positive regulation of transcription by RNA polymerase II"/>
    <property type="evidence" value="ECO:0000314"/>
    <property type="project" value="NTNU_SB"/>
</dbReference>
<dbReference type="CDD" id="cd07765">
    <property type="entry name" value="KRAB_A-box"/>
    <property type="match status" value="1"/>
</dbReference>
<dbReference type="FunFam" id="3.30.160.60:FF:000029">
    <property type="entry name" value="GLI family zinc finger 4"/>
    <property type="match status" value="1"/>
</dbReference>
<dbReference type="FunFam" id="3.30.160.60:FF:002063">
    <property type="entry name" value="RB associated KRAB zinc finger"/>
    <property type="match status" value="1"/>
</dbReference>
<dbReference type="FunFam" id="3.30.160.60:FF:000478">
    <property type="entry name" value="Zinc finger protein 133"/>
    <property type="match status" value="1"/>
</dbReference>
<dbReference type="FunFam" id="3.30.160.60:FF:000295">
    <property type="entry name" value="zinc finger protein 19"/>
    <property type="match status" value="1"/>
</dbReference>
<dbReference type="FunFam" id="3.30.160.60:FF:002343">
    <property type="entry name" value="Zinc finger protein 33A"/>
    <property type="match status" value="4"/>
</dbReference>
<dbReference type="FunFam" id="3.30.160.60:FF:002004">
    <property type="entry name" value="Zinc finger protein 473"/>
    <property type="match status" value="1"/>
</dbReference>
<dbReference type="FunFam" id="3.30.160.60:FF:000754">
    <property type="entry name" value="Zinc finger protein 585A"/>
    <property type="match status" value="1"/>
</dbReference>
<dbReference type="FunFam" id="3.30.160.60:FF:001396">
    <property type="entry name" value="Zinc finger protein 585A"/>
    <property type="match status" value="2"/>
</dbReference>
<dbReference type="FunFam" id="3.30.160.60:FF:000710">
    <property type="entry name" value="Zinc finger protein 768"/>
    <property type="match status" value="1"/>
</dbReference>
<dbReference type="Gene3D" id="6.10.140.140">
    <property type="match status" value="1"/>
</dbReference>
<dbReference type="Gene3D" id="3.30.160.60">
    <property type="entry name" value="Classic Zinc Finger"/>
    <property type="match status" value="14"/>
</dbReference>
<dbReference type="InterPro" id="IPR001909">
    <property type="entry name" value="KRAB"/>
</dbReference>
<dbReference type="InterPro" id="IPR036051">
    <property type="entry name" value="KRAB_dom_sf"/>
</dbReference>
<dbReference type="InterPro" id="IPR036236">
    <property type="entry name" value="Znf_C2H2_sf"/>
</dbReference>
<dbReference type="InterPro" id="IPR013087">
    <property type="entry name" value="Znf_C2H2_type"/>
</dbReference>
<dbReference type="PANTHER" id="PTHR24376">
    <property type="entry name" value="ZINC FINGER PROTEIN"/>
    <property type="match status" value="1"/>
</dbReference>
<dbReference type="PANTHER" id="PTHR24376:SF216">
    <property type="entry name" value="ZINC FINGER PROTEIN 420-LIKE"/>
    <property type="match status" value="1"/>
</dbReference>
<dbReference type="Pfam" id="PF01352">
    <property type="entry name" value="KRAB"/>
    <property type="match status" value="1"/>
</dbReference>
<dbReference type="Pfam" id="PF00096">
    <property type="entry name" value="zf-C2H2"/>
    <property type="match status" value="13"/>
</dbReference>
<dbReference type="SMART" id="SM00349">
    <property type="entry name" value="KRAB"/>
    <property type="match status" value="1"/>
</dbReference>
<dbReference type="SMART" id="SM00355">
    <property type="entry name" value="ZnF_C2H2"/>
    <property type="match status" value="14"/>
</dbReference>
<dbReference type="SUPFAM" id="SSF57667">
    <property type="entry name" value="beta-beta-alpha zinc fingers"/>
    <property type="match status" value="10"/>
</dbReference>
<dbReference type="SUPFAM" id="SSF109640">
    <property type="entry name" value="KRAB domain (Kruppel-associated box)"/>
    <property type="match status" value="1"/>
</dbReference>
<dbReference type="PROSITE" id="PS50805">
    <property type="entry name" value="KRAB"/>
    <property type="match status" value="1"/>
</dbReference>
<dbReference type="PROSITE" id="PS00028">
    <property type="entry name" value="ZINC_FINGER_C2H2_1"/>
    <property type="match status" value="13"/>
</dbReference>
<dbReference type="PROSITE" id="PS50157">
    <property type="entry name" value="ZINC_FINGER_C2H2_2"/>
    <property type="match status" value="15"/>
</dbReference>
<organism>
    <name type="scientific">Homo sapiens</name>
    <name type="common">Human</name>
    <dbReference type="NCBI Taxonomy" id="9606"/>
    <lineage>
        <taxon>Eukaryota</taxon>
        <taxon>Metazoa</taxon>
        <taxon>Chordata</taxon>
        <taxon>Craniata</taxon>
        <taxon>Vertebrata</taxon>
        <taxon>Euteleostomi</taxon>
        <taxon>Mammalia</taxon>
        <taxon>Eutheria</taxon>
        <taxon>Euarchontoglires</taxon>
        <taxon>Primates</taxon>
        <taxon>Haplorrhini</taxon>
        <taxon>Catarrhini</taxon>
        <taxon>Hominidae</taxon>
        <taxon>Homo</taxon>
    </lineage>
</organism>
<feature type="chain" id="PRO_0000047440" description="Zinc finger protein 175">
    <location>
        <begin position="1"/>
        <end position="711"/>
    </location>
</feature>
<feature type="domain" description="KRAB" evidence="3">
    <location>
        <begin position="27"/>
        <end position="98"/>
    </location>
</feature>
<feature type="zinc finger region" description="C2H2-type 1; atypical" evidence="2">
    <location>
        <begin position="279"/>
        <end position="301"/>
    </location>
</feature>
<feature type="zinc finger region" description="C2H2-type 2; atypical" evidence="2">
    <location>
        <begin position="307"/>
        <end position="329"/>
    </location>
</feature>
<feature type="zinc finger region" description="C2H2-type 3" evidence="2">
    <location>
        <begin position="335"/>
        <end position="357"/>
    </location>
</feature>
<feature type="zinc finger region" description="C2H2-type 4" evidence="2">
    <location>
        <begin position="363"/>
        <end position="385"/>
    </location>
</feature>
<feature type="zinc finger region" description="C2H2-type 5" evidence="2">
    <location>
        <begin position="391"/>
        <end position="413"/>
    </location>
</feature>
<feature type="zinc finger region" description="C2H2-type 6" evidence="2">
    <location>
        <begin position="419"/>
        <end position="441"/>
    </location>
</feature>
<feature type="zinc finger region" description="C2H2-type 7" evidence="2">
    <location>
        <begin position="447"/>
        <end position="469"/>
    </location>
</feature>
<feature type="zinc finger region" description="C2H2-type 8" evidence="2">
    <location>
        <begin position="475"/>
        <end position="497"/>
    </location>
</feature>
<feature type="zinc finger region" description="C2H2-type 9" evidence="2">
    <location>
        <begin position="503"/>
        <end position="525"/>
    </location>
</feature>
<feature type="zinc finger region" description="C2H2-type 10" evidence="2">
    <location>
        <begin position="531"/>
        <end position="553"/>
    </location>
</feature>
<feature type="zinc finger region" description="C2H2-type 11" evidence="2">
    <location>
        <begin position="559"/>
        <end position="581"/>
    </location>
</feature>
<feature type="zinc finger region" description="C2H2-type 12" evidence="2">
    <location>
        <begin position="587"/>
        <end position="609"/>
    </location>
</feature>
<feature type="zinc finger region" description="C2H2-type 13" evidence="2">
    <location>
        <begin position="615"/>
        <end position="637"/>
    </location>
</feature>
<feature type="zinc finger region" description="C2H2-type 14" evidence="2">
    <location>
        <begin position="643"/>
        <end position="665"/>
    </location>
</feature>
<feature type="zinc finger region" description="C2H2-type 15" evidence="2">
    <location>
        <begin position="671"/>
        <end position="693"/>
    </location>
</feature>
<feature type="region of interest" description="Disordered" evidence="4">
    <location>
        <begin position="1"/>
        <end position="21"/>
    </location>
</feature>
<feature type="short sequence motif" description="Nuclear localization signal" evidence="1">
    <location>
        <begin position="359"/>
        <end position="362"/>
    </location>
</feature>
<feature type="compositionally biased region" description="Polar residues" evidence="4">
    <location>
        <begin position="1"/>
        <end position="11"/>
    </location>
</feature>
<feature type="sequence variant" id="VAR_061938" description="In dbSNP:rs60097262.">
    <original>Y</original>
    <variation>N</variation>
    <location>
        <position position="363"/>
    </location>
</feature>
<feature type="sequence variant" id="VAR_052789" description="In dbSNP:rs3764548.">
    <original>C</original>
    <variation>R</variation>
    <location>
        <position position="505"/>
    </location>
</feature>
<feature type="sequence variant" id="VAR_083478" description="In dbSNP:rs746283244." evidence="6">
    <original>K</original>
    <variation>R</variation>
    <location>
        <position position="622"/>
    </location>
</feature>
<comment type="function">
    <text evidence="5">Down-regulates the expression of several chemokine receptors. Interferes with HIV-1 replication by suppressing Tat-induced viral LTR promoter activity.</text>
</comment>
<comment type="interaction">
    <interactant intactId="EBI-3438881">
        <id>Q9Y473</id>
    </interactant>
    <interactant intactId="EBI-3905054">
        <id>P13196</id>
        <label>ALAS1</label>
    </interactant>
    <organismsDiffer>false</organismsDiffer>
    <experiments>6</experiments>
</comment>
<comment type="interaction">
    <interactant intactId="EBI-3438881">
        <id>Q9Y473</id>
    </interactant>
    <interactant intactId="EBI-10172290">
        <id>P60409</id>
        <label>KRTAP10-7</label>
    </interactant>
    <organismsDiffer>false</organismsDiffer>
    <experiments>3</experiments>
</comment>
<comment type="interaction">
    <interactant intactId="EBI-3438881">
        <id>Q9Y473</id>
    </interactant>
    <interactant intactId="EBI-1050964">
        <id>O43586</id>
        <label>PSTPIP1</label>
    </interactant>
    <organismsDiffer>false</organismsDiffer>
    <experiments>3</experiments>
</comment>
<comment type="interaction">
    <interactant intactId="EBI-3438881">
        <id>Q9Y473</id>
    </interactant>
    <interactant intactId="EBI-10177272">
        <id>P15622-3</id>
        <label>ZNF250</label>
    </interactant>
    <organismsDiffer>false</organismsDiffer>
    <experiments>3</experiments>
</comment>
<comment type="interaction">
    <interactant intactId="EBI-3438881">
        <id>Q9Y473</id>
    </interactant>
    <interactant intactId="EBI-4395808">
        <id>O43296</id>
        <label>ZNF264</label>
    </interactant>
    <organismsDiffer>false</organismsDiffer>
    <experiments>5</experiments>
</comment>
<comment type="interaction">
    <interactant intactId="EBI-3438881">
        <id>Q9Y473</id>
    </interactant>
    <interactant intactId="EBI-2826570">
        <id>Q14C61</id>
        <label>ZNF264</label>
    </interactant>
    <organismsDiffer>false</organismsDiffer>
    <experiments>3</experiments>
</comment>
<comment type="subcellular location">
    <subcellularLocation>
        <location>Cytoplasm</location>
    </subcellularLocation>
    <subcellularLocation>
        <location>Nucleus</location>
    </subcellularLocation>
</comment>
<comment type="tissue specificity">
    <text>Ubiquitous.</text>
</comment>
<comment type="induction">
    <text>By HIV-1 infection.</text>
</comment>
<comment type="similarity">
    <text evidence="7">Belongs to the krueppel C2H2-type zinc-finger protein family.</text>
</comment>
<sequence length="711" mass="81609">MPADVNLSQKPQVLGPEKQDGSCEASVSFEDVTVDFSREEWQQLDPAQRCLYRDVMLELYSHLFAVGYHIPNPEVIFRMLKEKEPRVEEAEVSHQRCQEREFGLEIPQKEISKKASFQKDMVGEFTRDGSWCSILEELRLDADRTKKDEQNQIQPMSHSAFFNKKTLNTESNCEYKDPGKMIRTRPHLASSQKQPQKCCLFTESLKLNLEVNGQNESNDTEQLDDVVGSGQLFSHSSSDACSKNIHTGETFCKGNQCRKVCGHKQSLKQHQIHTQKKPDGCSECGGSFTQKSHLFAQQRIHSVGNLHECGKCGKAFMPQLKLSVYLTDHTGDIPCICKECGKVFIQRSELLTHQKTHTRKKPYKCHDCGKAFFQMLSLFRHQRTHSREKLYECSECGKGFSQNSTLIIHQKIHTGERQYACSECGKAFTQKSTLSLHQRIHSGQKSYVCIECGQAFIQKAHLIVHQRSHTGEKPYQCHNCGKSFISKSQLDIHHRIHTGEKPYECSDCGKTFTQKSHLNIHQKIHTGERHHVCSECGKAFNQKSILSMHQRIHTGEKPYKCSECGKAFTSKSQFKEHQRIHTGEKPYVCTECGKAFNGRSNFHKHQITHTRERPFVCYKCGKAFVQKSELITHQRTHMGEKPYECLDCGKSFSKKPQLKVHQRIHTGERPYVCSECGKAFNNRSNFNKHQTTHTRDKSYKCSYSVKGFTKQ</sequence>
<proteinExistence type="evidence at protein level"/>
<accession>Q9Y473</accession>
<accession>A8K9H2</accession>
<keyword id="KW-0051">Antiviral defense</keyword>
<keyword id="KW-0963">Cytoplasm</keyword>
<keyword id="KW-0238">DNA-binding</keyword>
<keyword id="KW-0479">Metal-binding</keyword>
<keyword id="KW-0539">Nucleus</keyword>
<keyword id="KW-1267">Proteomics identification</keyword>
<keyword id="KW-1185">Reference proteome</keyword>
<keyword id="KW-0677">Repeat</keyword>
<keyword id="KW-0678">Repressor</keyword>
<keyword id="KW-0804">Transcription</keyword>
<keyword id="KW-0805">Transcription regulation</keyword>
<keyword id="KW-0862">Zinc</keyword>
<keyword id="KW-0863">Zinc-finger</keyword>
<name>ZN175_HUMAN</name>
<reference key="1">
    <citation type="journal article" date="1996" name="Genomics">
        <title>Isolation and mapping of a novel human gene encoding a protein containing zinc-finger structures.</title>
        <authorList>
            <person name="Saito H."/>
            <person name="Fujiwara T."/>
            <person name="Takahashi E."/>
            <person name="Shin S."/>
            <person name="Okui K."/>
            <person name="Nakamura Y."/>
        </authorList>
    </citation>
    <scope>NUCLEOTIDE SEQUENCE [MRNA]</scope>
    <source>
        <tissue>Fetal brain</tissue>
    </source>
</reference>
<reference key="2">
    <citation type="journal article" date="2004" name="Nat. Genet.">
        <title>Complete sequencing and characterization of 21,243 full-length human cDNAs.</title>
        <authorList>
            <person name="Ota T."/>
            <person name="Suzuki Y."/>
            <person name="Nishikawa T."/>
            <person name="Otsuki T."/>
            <person name="Sugiyama T."/>
            <person name="Irie R."/>
            <person name="Wakamatsu A."/>
            <person name="Hayashi K."/>
            <person name="Sato H."/>
            <person name="Nagai K."/>
            <person name="Kimura K."/>
            <person name="Makita H."/>
            <person name="Sekine M."/>
            <person name="Obayashi M."/>
            <person name="Nishi T."/>
            <person name="Shibahara T."/>
            <person name="Tanaka T."/>
            <person name="Ishii S."/>
            <person name="Yamamoto J."/>
            <person name="Saito K."/>
            <person name="Kawai Y."/>
            <person name="Isono Y."/>
            <person name="Nakamura Y."/>
            <person name="Nagahari K."/>
            <person name="Murakami K."/>
            <person name="Yasuda T."/>
            <person name="Iwayanagi T."/>
            <person name="Wagatsuma M."/>
            <person name="Shiratori A."/>
            <person name="Sudo H."/>
            <person name="Hosoiri T."/>
            <person name="Kaku Y."/>
            <person name="Kodaira H."/>
            <person name="Kondo H."/>
            <person name="Sugawara M."/>
            <person name="Takahashi M."/>
            <person name="Kanda K."/>
            <person name="Yokoi T."/>
            <person name="Furuya T."/>
            <person name="Kikkawa E."/>
            <person name="Omura Y."/>
            <person name="Abe K."/>
            <person name="Kamihara K."/>
            <person name="Katsuta N."/>
            <person name="Sato K."/>
            <person name="Tanikawa M."/>
            <person name="Yamazaki M."/>
            <person name="Ninomiya K."/>
            <person name="Ishibashi T."/>
            <person name="Yamashita H."/>
            <person name="Murakawa K."/>
            <person name="Fujimori K."/>
            <person name="Tanai H."/>
            <person name="Kimata M."/>
            <person name="Watanabe M."/>
            <person name="Hiraoka S."/>
            <person name="Chiba Y."/>
            <person name="Ishida S."/>
            <person name="Ono Y."/>
            <person name="Takiguchi S."/>
            <person name="Watanabe S."/>
            <person name="Yosida M."/>
            <person name="Hotuta T."/>
            <person name="Kusano J."/>
            <person name="Kanehori K."/>
            <person name="Takahashi-Fujii A."/>
            <person name="Hara H."/>
            <person name="Tanase T.-O."/>
            <person name="Nomura Y."/>
            <person name="Togiya S."/>
            <person name="Komai F."/>
            <person name="Hara R."/>
            <person name="Takeuchi K."/>
            <person name="Arita M."/>
            <person name="Imose N."/>
            <person name="Musashino K."/>
            <person name="Yuuki H."/>
            <person name="Oshima A."/>
            <person name="Sasaki N."/>
            <person name="Aotsuka S."/>
            <person name="Yoshikawa Y."/>
            <person name="Matsunawa H."/>
            <person name="Ichihara T."/>
            <person name="Shiohata N."/>
            <person name="Sano S."/>
            <person name="Moriya S."/>
            <person name="Momiyama H."/>
            <person name="Satoh N."/>
            <person name="Takami S."/>
            <person name="Terashima Y."/>
            <person name="Suzuki O."/>
            <person name="Nakagawa S."/>
            <person name="Senoh A."/>
            <person name="Mizoguchi H."/>
            <person name="Goto Y."/>
            <person name="Shimizu F."/>
            <person name="Wakebe H."/>
            <person name="Hishigaki H."/>
            <person name="Watanabe T."/>
            <person name="Sugiyama A."/>
            <person name="Takemoto M."/>
            <person name="Kawakami B."/>
            <person name="Yamazaki M."/>
            <person name="Watanabe K."/>
            <person name="Kumagai A."/>
            <person name="Itakura S."/>
            <person name="Fukuzumi Y."/>
            <person name="Fujimori Y."/>
            <person name="Komiyama M."/>
            <person name="Tashiro H."/>
            <person name="Tanigami A."/>
            <person name="Fujiwara T."/>
            <person name="Ono T."/>
            <person name="Yamada K."/>
            <person name="Fujii Y."/>
            <person name="Ozaki K."/>
            <person name="Hirao M."/>
            <person name="Ohmori Y."/>
            <person name="Kawabata A."/>
            <person name="Hikiji T."/>
            <person name="Kobatake N."/>
            <person name="Inagaki H."/>
            <person name="Ikema Y."/>
            <person name="Okamoto S."/>
            <person name="Okitani R."/>
            <person name="Kawakami T."/>
            <person name="Noguchi S."/>
            <person name="Itoh T."/>
            <person name="Shigeta K."/>
            <person name="Senba T."/>
            <person name="Matsumura K."/>
            <person name="Nakajima Y."/>
            <person name="Mizuno T."/>
            <person name="Morinaga M."/>
            <person name="Sasaki M."/>
            <person name="Togashi T."/>
            <person name="Oyama M."/>
            <person name="Hata H."/>
            <person name="Watanabe M."/>
            <person name="Komatsu T."/>
            <person name="Mizushima-Sugano J."/>
            <person name="Satoh T."/>
            <person name="Shirai Y."/>
            <person name="Takahashi Y."/>
            <person name="Nakagawa K."/>
            <person name="Okumura K."/>
            <person name="Nagase T."/>
            <person name="Nomura N."/>
            <person name="Kikuchi H."/>
            <person name="Masuho Y."/>
            <person name="Yamashita R."/>
            <person name="Nakai K."/>
            <person name="Yada T."/>
            <person name="Nakamura Y."/>
            <person name="Ohara O."/>
            <person name="Isogai T."/>
            <person name="Sugano S."/>
        </authorList>
    </citation>
    <scope>NUCLEOTIDE SEQUENCE [LARGE SCALE MRNA]</scope>
    <source>
        <tissue>Thymus</tissue>
    </source>
</reference>
<reference key="3">
    <citation type="journal article" date="2004" name="Nature">
        <title>The DNA sequence and biology of human chromosome 19.</title>
        <authorList>
            <person name="Grimwood J."/>
            <person name="Gordon L.A."/>
            <person name="Olsen A.S."/>
            <person name="Terry A."/>
            <person name="Schmutz J."/>
            <person name="Lamerdin J.E."/>
            <person name="Hellsten U."/>
            <person name="Goodstein D."/>
            <person name="Couronne O."/>
            <person name="Tran-Gyamfi M."/>
            <person name="Aerts A."/>
            <person name="Altherr M."/>
            <person name="Ashworth L."/>
            <person name="Bajorek E."/>
            <person name="Black S."/>
            <person name="Branscomb E."/>
            <person name="Caenepeel S."/>
            <person name="Carrano A.V."/>
            <person name="Caoile C."/>
            <person name="Chan Y.M."/>
            <person name="Christensen M."/>
            <person name="Cleland C.A."/>
            <person name="Copeland A."/>
            <person name="Dalin E."/>
            <person name="Dehal P."/>
            <person name="Denys M."/>
            <person name="Detter J.C."/>
            <person name="Escobar J."/>
            <person name="Flowers D."/>
            <person name="Fotopulos D."/>
            <person name="Garcia C."/>
            <person name="Georgescu A.M."/>
            <person name="Glavina T."/>
            <person name="Gomez M."/>
            <person name="Gonzales E."/>
            <person name="Groza M."/>
            <person name="Hammon N."/>
            <person name="Hawkins T."/>
            <person name="Haydu L."/>
            <person name="Ho I."/>
            <person name="Huang W."/>
            <person name="Israni S."/>
            <person name="Jett J."/>
            <person name="Kadner K."/>
            <person name="Kimball H."/>
            <person name="Kobayashi A."/>
            <person name="Larionov V."/>
            <person name="Leem S.-H."/>
            <person name="Lopez F."/>
            <person name="Lou Y."/>
            <person name="Lowry S."/>
            <person name="Malfatti S."/>
            <person name="Martinez D."/>
            <person name="McCready P.M."/>
            <person name="Medina C."/>
            <person name="Morgan J."/>
            <person name="Nelson K."/>
            <person name="Nolan M."/>
            <person name="Ovcharenko I."/>
            <person name="Pitluck S."/>
            <person name="Pollard M."/>
            <person name="Popkie A.P."/>
            <person name="Predki P."/>
            <person name="Quan G."/>
            <person name="Ramirez L."/>
            <person name="Rash S."/>
            <person name="Retterer J."/>
            <person name="Rodriguez A."/>
            <person name="Rogers S."/>
            <person name="Salamov A."/>
            <person name="Salazar A."/>
            <person name="She X."/>
            <person name="Smith D."/>
            <person name="Slezak T."/>
            <person name="Solovyev V."/>
            <person name="Thayer N."/>
            <person name="Tice H."/>
            <person name="Tsai M."/>
            <person name="Ustaszewska A."/>
            <person name="Vo N."/>
            <person name="Wagner M."/>
            <person name="Wheeler J."/>
            <person name="Wu K."/>
            <person name="Xie G."/>
            <person name="Yang J."/>
            <person name="Dubchak I."/>
            <person name="Furey T.S."/>
            <person name="DeJong P."/>
            <person name="Dickson M."/>
            <person name="Gordon D."/>
            <person name="Eichler E.E."/>
            <person name="Pennacchio L.A."/>
            <person name="Richardson P."/>
            <person name="Stubbs L."/>
            <person name="Rokhsar D.S."/>
            <person name="Myers R.M."/>
            <person name="Rubin E.M."/>
            <person name="Lucas S.M."/>
        </authorList>
    </citation>
    <scope>NUCLEOTIDE SEQUENCE [LARGE SCALE GENOMIC DNA]</scope>
</reference>
<reference key="4">
    <citation type="submission" date="2005-07" db="EMBL/GenBank/DDBJ databases">
        <authorList>
            <person name="Mural R.J."/>
            <person name="Istrail S."/>
            <person name="Sutton G.G."/>
            <person name="Florea L."/>
            <person name="Halpern A.L."/>
            <person name="Mobarry C.M."/>
            <person name="Lippert R."/>
            <person name="Walenz B."/>
            <person name="Shatkay H."/>
            <person name="Dew I."/>
            <person name="Miller J.R."/>
            <person name="Flanigan M.J."/>
            <person name="Edwards N.J."/>
            <person name="Bolanos R."/>
            <person name="Fasulo D."/>
            <person name="Halldorsson B.V."/>
            <person name="Hannenhalli S."/>
            <person name="Turner R."/>
            <person name="Yooseph S."/>
            <person name="Lu F."/>
            <person name="Nusskern D.R."/>
            <person name="Shue B.C."/>
            <person name="Zheng X.H."/>
            <person name="Zhong F."/>
            <person name="Delcher A.L."/>
            <person name="Huson D.H."/>
            <person name="Kravitz S.A."/>
            <person name="Mouchard L."/>
            <person name="Reinert K."/>
            <person name="Remington K.A."/>
            <person name="Clark A.G."/>
            <person name="Waterman M.S."/>
            <person name="Eichler E.E."/>
            <person name="Adams M.D."/>
            <person name="Hunkapiller M.W."/>
            <person name="Myers E.W."/>
            <person name="Venter J.C."/>
        </authorList>
    </citation>
    <scope>NUCLEOTIDE SEQUENCE [LARGE SCALE GENOMIC DNA]</scope>
</reference>
<reference key="5">
    <citation type="journal article" date="2004" name="Genome Res.">
        <title>The status, quality, and expansion of the NIH full-length cDNA project: the Mammalian Gene Collection (MGC).</title>
        <authorList>
            <consortium name="The MGC Project Team"/>
        </authorList>
    </citation>
    <scope>NUCLEOTIDE SEQUENCE [LARGE SCALE MRNA]</scope>
    <source>
        <tissue>Uterus</tissue>
    </source>
</reference>
<reference key="6">
    <citation type="journal article" date="2004" name="J. Immunol.">
        <title>Molecular characterization of a putative antiretroviral transcriptional factor, OTK18.</title>
        <authorList>
            <person name="Carlson K.A."/>
            <person name="Leisman G."/>
            <person name="Limoges J."/>
            <person name="Pohlman G.D."/>
            <person name="Horiba M."/>
            <person name="Buescher J."/>
            <person name="Gendelman H.E."/>
            <person name="Ikezu T."/>
        </authorList>
    </citation>
    <scope>CHARACTERIZATION</scope>
    <scope>FUNCTION AS AN ANTIRETROVIRAL PROTEIN</scope>
</reference>
<reference key="7">
    <citation type="journal article" date="2018" name="Am. J. Hum. Genet.">
        <title>De Novo Truncating Mutations in WASF1 Cause Intellectual Disability with Seizures.</title>
        <authorList>
            <consortium name="NIHR BioResource"/>
            <consortium name="Care4Rare Canada Consortium"/>
            <person name="Ito Y."/>
            <person name="Carss K.J."/>
            <person name="Duarte S.T."/>
            <person name="Hartley T."/>
            <person name="Keren B."/>
            <person name="Kurian M.A."/>
            <person name="Marey I."/>
            <person name="Charles P."/>
            <person name="Mendonca C."/>
            <person name="Nava C."/>
            <person name="Pfundt R."/>
            <person name="Sanchis-Juan A."/>
            <person name="van Bokhoven H."/>
            <person name="van Essen A."/>
            <person name="van Ravenswaaij-Arts C."/>
            <person name="Boycott K.M."/>
            <person name="Kernohan K.D."/>
            <person name="Dyack S."/>
            <person name="Raymond F.L."/>
        </authorList>
    </citation>
    <scope>VARIANT ARG-622</scope>
</reference>
<protein>
    <recommendedName>
        <fullName>Zinc finger protein 175</fullName>
    </recommendedName>
    <alternativeName>
        <fullName>Zinc finger protein OTK18</fullName>
    </alternativeName>
</protein>
<evidence type="ECO:0000255" key="1"/>
<evidence type="ECO:0000255" key="2">
    <source>
        <dbReference type="PROSITE-ProRule" id="PRU00042"/>
    </source>
</evidence>
<evidence type="ECO:0000255" key="3">
    <source>
        <dbReference type="PROSITE-ProRule" id="PRU00119"/>
    </source>
</evidence>
<evidence type="ECO:0000256" key="4">
    <source>
        <dbReference type="SAM" id="MobiDB-lite"/>
    </source>
</evidence>
<evidence type="ECO:0000269" key="5">
    <source>
    </source>
</evidence>
<evidence type="ECO:0000269" key="6">
    <source>
    </source>
</evidence>
<evidence type="ECO:0000305" key="7"/>